<evidence type="ECO:0000250" key="1"/>
<evidence type="ECO:0000250" key="2">
    <source>
        <dbReference type="UniProtKB" id="Q5DU14"/>
    </source>
</evidence>
<evidence type="ECO:0000250" key="3">
    <source>
        <dbReference type="UniProtKB" id="Q9Y6X6"/>
    </source>
</evidence>
<evidence type="ECO:0000255" key="4"/>
<evidence type="ECO:0000255" key="5">
    <source>
        <dbReference type="PROSITE-ProRule" id="PRU00116"/>
    </source>
</evidence>
<evidence type="ECO:0000255" key="6">
    <source>
        <dbReference type="PROSITE-ProRule" id="PRU00782"/>
    </source>
</evidence>
<evidence type="ECO:0000256" key="7">
    <source>
        <dbReference type="SAM" id="MobiDB-lite"/>
    </source>
</evidence>
<evidence type="ECO:0000269" key="8">
    <source>
    </source>
</evidence>
<evidence type="ECO:0000303" key="9">
    <source>
    </source>
</evidence>
<evidence type="ECO:0000305" key="10"/>
<evidence type="ECO:0000312" key="11">
    <source>
        <dbReference type="EMBL" id="AAG23288.1"/>
    </source>
</evidence>
<evidence type="ECO:0000312" key="12">
    <source>
        <dbReference type="RGD" id="621561"/>
    </source>
</evidence>
<gene>
    <name evidence="3" type="primary">Myo16</name>
    <name evidence="12" type="synonym">Myr8</name>
    <name type="synonym">Nyap3</name>
</gene>
<name>MYO16_RAT</name>
<keyword id="KW-0009">Actin-binding</keyword>
<keyword id="KW-0025">Alternative splicing</keyword>
<keyword id="KW-0040">ANK repeat</keyword>
<keyword id="KW-0067">ATP-binding</keyword>
<keyword id="KW-0963">Cytoplasm</keyword>
<keyword id="KW-0505">Motor protein</keyword>
<keyword id="KW-0518">Myosin</keyword>
<keyword id="KW-0547">Nucleotide-binding</keyword>
<keyword id="KW-0597">Phosphoprotein</keyword>
<keyword id="KW-1185">Reference proteome</keyword>
<keyword id="KW-0677">Repeat</keyword>
<comment type="function">
    <text evidence="1 8">Myosins are actin-based motor molecules with ATPase activity. Unconventional myosins serve in intracellular movements. Their highly divergent tails are presumed to bind to membranous compartments, which would be moved relative to actin filaments (By similarity). May be involved in targeting of the catalytic subunit of protein phosphatase 1 during brain development. Activates PI3K and concomitantly recruits the WAVE1 complex to the close vicinity of PI3K and regulates neuronal morphogenesis (By similarity).</text>
</comment>
<comment type="subunit">
    <text evidence="2 3 8">Binds PPP1CA and/or PPP1CC. Binds F-actin in an ATP-sensitive manner (PubMed:11588169). Interacts with ACOT9, ARHGAP26 and PIK3R2. Interacts with components of the WAVE1 complex, CYFIP1 and NCKAP1; this interaction mediates PI3K-WAVE1 association and actin cytoskeleton remodeling (By similarity). Interacts with KIRREL3 (By similarity).</text>
</comment>
<comment type="subcellular location">
    <subcellularLocation>
        <location evidence="8">Cytoplasm</location>
    </subcellularLocation>
    <text evidence="8">Found in puncta in soma and processes of astrocytes and dissociated cerebellar cells with the morphology of migrating granule cells.</text>
</comment>
<comment type="alternative products">
    <event type="alternative splicing"/>
    <isoform>
        <id>Q9ERC1-1</id>
        <name evidence="8">1</name>
        <name evidence="8">Myr8b</name>
        <sequence type="displayed"/>
    </isoform>
    <isoform>
        <id>Q9ERC1-2</id>
        <name evidence="8">2</name>
        <name evidence="8">Myr8a</name>
        <sequence type="described" ref="VSP_052444 VSP_052445"/>
    </isoform>
</comment>
<comment type="tissue specificity">
    <text evidence="8">Highest level of isoform 1 found in brain. Also found in bladder, kidney and lung. Very low or undetectable levels of isoform 2 in all tissues tested.</text>
</comment>
<comment type="developmental stage">
    <text evidence="8">Isoform 1 is expressed at all developmental stages with highest levels during the first two weeks after birth when migration of neurons and formation of dendrites and axons is highest. Within the developing brain the highest level is found in granule neurons in the initial stages of migration. Also found in soma and dendrites of developing Purkinje cells.</text>
</comment>
<comment type="PTM">
    <text evidence="1">Phosphorylated on tyrosine residues by FYN upon stimulation with CNTN5.</text>
</comment>
<comment type="similarity">
    <text evidence="10">In the N-terminal section; belongs to the TRAFAC class myosin-kinesin ATPase superfamily. Myosin family.</text>
</comment>
<comment type="similarity">
    <text evidence="10">In the C-terminal section; belongs to the NYAP family.</text>
</comment>
<proteinExistence type="evidence at protein level"/>
<dbReference type="EMBL" id="AF209114">
    <property type="protein sequence ID" value="AAF20150.1"/>
    <property type="molecule type" value="mRNA"/>
</dbReference>
<dbReference type="EMBL" id="AY004215">
    <property type="protein sequence ID" value="AAG23288.1"/>
    <property type="molecule type" value="mRNA"/>
</dbReference>
<dbReference type="PIR" id="A59288">
    <property type="entry name" value="A59288"/>
</dbReference>
<dbReference type="RefSeq" id="NP_620248.1">
    <molecule id="Q9ERC1-1"/>
    <property type="nucleotide sequence ID" value="NM_138893.2"/>
</dbReference>
<dbReference type="RefSeq" id="XP_017455479.1">
    <molecule id="Q9ERC1-1"/>
    <property type="nucleotide sequence ID" value="XM_017599990.3"/>
</dbReference>
<dbReference type="SMR" id="Q9ERC1"/>
<dbReference type="BioGRID" id="251379">
    <property type="interactions" value="1"/>
</dbReference>
<dbReference type="FunCoup" id="Q9ERC1">
    <property type="interactions" value="50"/>
</dbReference>
<dbReference type="STRING" id="10116.ENSRNOP00000022741"/>
<dbReference type="GlyGen" id="Q9ERC1">
    <property type="glycosylation" value="2 sites"/>
</dbReference>
<dbReference type="iPTMnet" id="Q9ERC1"/>
<dbReference type="PhosphoSitePlus" id="Q9ERC1"/>
<dbReference type="PaxDb" id="10116-ENSRNOP00000022741"/>
<dbReference type="Ensembl" id="ENSRNOT00000022742.4">
    <molecule id="Q9ERC1-1"/>
    <property type="protein sequence ID" value="ENSRNOP00000022741.4"/>
    <property type="gene ID" value="ENSRNOG00000016483.7"/>
</dbReference>
<dbReference type="GeneID" id="192253"/>
<dbReference type="KEGG" id="rno:192253"/>
<dbReference type="UCSC" id="RGD:621561">
    <molecule id="Q9ERC1-1"/>
    <property type="organism name" value="rat"/>
</dbReference>
<dbReference type="AGR" id="RGD:621561"/>
<dbReference type="CTD" id="23026"/>
<dbReference type="RGD" id="621561">
    <property type="gene designation" value="Myo16"/>
</dbReference>
<dbReference type="eggNOG" id="KOG0505">
    <property type="taxonomic scope" value="Eukaryota"/>
</dbReference>
<dbReference type="eggNOG" id="KOG4229">
    <property type="taxonomic scope" value="Eukaryota"/>
</dbReference>
<dbReference type="GeneTree" id="ENSGT00940000158920"/>
<dbReference type="HOGENOM" id="CLU_002267_0_0_1"/>
<dbReference type="InParanoid" id="Q9ERC1"/>
<dbReference type="OMA" id="GPRHFHC"/>
<dbReference type="OrthoDB" id="9935913at2759"/>
<dbReference type="PhylomeDB" id="Q9ERC1"/>
<dbReference type="TreeFam" id="TF332267"/>
<dbReference type="PRO" id="PR:Q9ERC1"/>
<dbReference type="Proteomes" id="UP000002494">
    <property type="component" value="Chromosome 16"/>
</dbReference>
<dbReference type="Bgee" id="ENSRNOG00000016483">
    <property type="expression patterns" value="Expressed in frontal cortex and 3 other cell types or tissues"/>
</dbReference>
<dbReference type="GO" id="GO:0005737">
    <property type="term" value="C:cytoplasm"/>
    <property type="evidence" value="ECO:0000314"/>
    <property type="project" value="HGNC-UCL"/>
</dbReference>
<dbReference type="GO" id="GO:0016459">
    <property type="term" value="C:myosin complex"/>
    <property type="evidence" value="ECO:0000314"/>
    <property type="project" value="RGD"/>
</dbReference>
<dbReference type="GO" id="GO:0005654">
    <property type="term" value="C:nucleoplasm"/>
    <property type="evidence" value="ECO:0000314"/>
    <property type="project" value="HGNC-UCL"/>
</dbReference>
<dbReference type="GO" id="GO:0048471">
    <property type="term" value="C:perinuclear region of cytoplasm"/>
    <property type="evidence" value="ECO:0000314"/>
    <property type="project" value="HGNC-UCL"/>
</dbReference>
<dbReference type="GO" id="GO:0005886">
    <property type="term" value="C:plasma membrane"/>
    <property type="evidence" value="ECO:0000314"/>
    <property type="project" value="HGNC-UCL"/>
</dbReference>
<dbReference type="GO" id="GO:0003779">
    <property type="term" value="F:actin binding"/>
    <property type="evidence" value="ECO:0000314"/>
    <property type="project" value="RGD"/>
</dbReference>
<dbReference type="GO" id="GO:0051015">
    <property type="term" value="F:actin filament binding"/>
    <property type="evidence" value="ECO:0000314"/>
    <property type="project" value="HGNC-UCL"/>
</dbReference>
<dbReference type="GO" id="GO:0005524">
    <property type="term" value="F:ATP binding"/>
    <property type="evidence" value="ECO:0007669"/>
    <property type="project" value="UniProtKB-KW"/>
</dbReference>
<dbReference type="GO" id="GO:0003774">
    <property type="term" value="F:cytoskeletal motor activity"/>
    <property type="evidence" value="ECO:0007669"/>
    <property type="project" value="InterPro"/>
</dbReference>
<dbReference type="GO" id="GO:0019903">
    <property type="term" value="F:protein phosphatase binding"/>
    <property type="evidence" value="ECO:0000353"/>
    <property type="project" value="UniProtKB"/>
</dbReference>
<dbReference type="GO" id="GO:0044877">
    <property type="term" value="F:protein-containing complex binding"/>
    <property type="evidence" value="ECO:0000353"/>
    <property type="project" value="RGD"/>
</dbReference>
<dbReference type="GO" id="GO:0021549">
    <property type="term" value="P:cerebellum development"/>
    <property type="evidence" value="ECO:0000270"/>
    <property type="project" value="HGNC-UCL"/>
</dbReference>
<dbReference type="GO" id="GO:0008285">
    <property type="term" value="P:negative regulation of cell population proliferation"/>
    <property type="evidence" value="ECO:0000314"/>
    <property type="project" value="HGNC-UCL"/>
</dbReference>
<dbReference type="GO" id="GO:2000134">
    <property type="term" value="P:negative regulation of G1/S transition of mitotic cell cycle"/>
    <property type="evidence" value="ECO:0000314"/>
    <property type="project" value="BHF-UCL"/>
</dbReference>
<dbReference type="GO" id="GO:0048812">
    <property type="term" value="P:neuron projection morphogenesis"/>
    <property type="evidence" value="ECO:0000266"/>
    <property type="project" value="RGD"/>
</dbReference>
<dbReference type="GO" id="GO:0043491">
    <property type="term" value="P:phosphatidylinositol 3-kinase/protein kinase B signal transduction"/>
    <property type="evidence" value="ECO:0000266"/>
    <property type="project" value="RGD"/>
</dbReference>
<dbReference type="CDD" id="cd14878">
    <property type="entry name" value="MYSc_Myo16"/>
    <property type="match status" value="1"/>
</dbReference>
<dbReference type="FunFam" id="1.25.40.20:FF:000168">
    <property type="entry name" value="Myosin XVI"/>
    <property type="match status" value="1"/>
</dbReference>
<dbReference type="FunFam" id="1.25.40.20:FF:000100">
    <property type="entry name" value="unconventional myosin-XVI"/>
    <property type="match status" value="1"/>
</dbReference>
<dbReference type="Gene3D" id="1.10.10.820">
    <property type="match status" value="1"/>
</dbReference>
<dbReference type="Gene3D" id="1.20.5.4820">
    <property type="match status" value="1"/>
</dbReference>
<dbReference type="Gene3D" id="1.20.58.530">
    <property type="match status" value="1"/>
</dbReference>
<dbReference type="Gene3D" id="1.25.40.20">
    <property type="entry name" value="Ankyrin repeat-containing domain"/>
    <property type="match status" value="2"/>
</dbReference>
<dbReference type="Gene3D" id="3.40.850.10">
    <property type="entry name" value="Kinesin motor domain"/>
    <property type="match status" value="1"/>
</dbReference>
<dbReference type="Gene3D" id="1.20.120.720">
    <property type="entry name" value="Myosin VI head, motor domain, U50 subdomain"/>
    <property type="match status" value="1"/>
</dbReference>
<dbReference type="InterPro" id="IPR002110">
    <property type="entry name" value="Ankyrin_rpt"/>
</dbReference>
<dbReference type="InterPro" id="IPR036770">
    <property type="entry name" value="Ankyrin_rpt-contain_sf"/>
</dbReference>
<dbReference type="InterPro" id="IPR036961">
    <property type="entry name" value="Kinesin_motor_dom_sf"/>
</dbReference>
<dbReference type="InterPro" id="IPR052838">
    <property type="entry name" value="Myosin-XVI"/>
</dbReference>
<dbReference type="InterPro" id="IPR001609">
    <property type="entry name" value="Myosin_head_motor_dom-like"/>
</dbReference>
<dbReference type="InterPro" id="IPR036042">
    <property type="entry name" value="MYSc_Myo16"/>
</dbReference>
<dbReference type="InterPro" id="IPR039482">
    <property type="entry name" value="NYAP_N"/>
</dbReference>
<dbReference type="InterPro" id="IPR027417">
    <property type="entry name" value="P-loop_NTPase"/>
</dbReference>
<dbReference type="PANTHER" id="PTHR47335">
    <property type="entry name" value="UNCONVENTIONAL MYOSIN-XVI"/>
    <property type="match status" value="1"/>
</dbReference>
<dbReference type="PANTHER" id="PTHR47335:SF1">
    <property type="entry name" value="UNCONVENTIONAL MYOSIN-XVI"/>
    <property type="match status" value="1"/>
</dbReference>
<dbReference type="Pfam" id="PF12796">
    <property type="entry name" value="Ank_2"/>
    <property type="match status" value="2"/>
</dbReference>
<dbReference type="Pfam" id="PF00063">
    <property type="entry name" value="Myosin_head"/>
    <property type="match status" value="1"/>
</dbReference>
<dbReference type="Pfam" id="PF15439">
    <property type="entry name" value="NYAP_N"/>
    <property type="match status" value="1"/>
</dbReference>
<dbReference type="PRINTS" id="PR00193">
    <property type="entry name" value="MYOSINHEAVY"/>
</dbReference>
<dbReference type="SMART" id="SM00248">
    <property type="entry name" value="ANK"/>
    <property type="match status" value="5"/>
</dbReference>
<dbReference type="SMART" id="SM00242">
    <property type="entry name" value="MYSc"/>
    <property type="match status" value="1"/>
</dbReference>
<dbReference type="SUPFAM" id="SSF48403">
    <property type="entry name" value="Ankyrin repeat"/>
    <property type="match status" value="1"/>
</dbReference>
<dbReference type="SUPFAM" id="SSF52540">
    <property type="entry name" value="P-loop containing nucleoside triphosphate hydrolases"/>
    <property type="match status" value="1"/>
</dbReference>
<dbReference type="PROSITE" id="PS50297">
    <property type="entry name" value="ANK_REP_REGION"/>
    <property type="match status" value="1"/>
</dbReference>
<dbReference type="PROSITE" id="PS50088">
    <property type="entry name" value="ANK_REPEAT"/>
    <property type="match status" value="4"/>
</dbReference>
<dbReference type="PROSITE" id="PS50096">
    <property type="entry name" value="IQ"/>
    <property type="match status" value="1"/>
</dbReference>
<dbReference type="PROSITE" id="PS51456">
    <property type="entry name" value="MYOSIN_MOTOR"/>
    <property type="match status" value="1"/>
</dbReference>
<organism>
    <name type="scientific">Rattus norvegicus</name>
    <name type="common">Rat</name>
    <dbReference type="NCBI Taxonomy" id="10116"/>
    <lineage>
        <taxon>Eukaryota</taxon>
        <taxon>Metazoa</taxon>
        <taxon>Chordata</taxon>
        <taxon>Craniata</taxon>
        <taxon>Vertebrata</taxon>
        <taxon>Euteleostomi</taxon>
        <taxon>Mammalia</taxon>
        <taxon>Eutheria</taxon>
        <taxon>Euarchontoglires</taxon>
        <taxon>Glires</taxon>
        <taxon>Rodentia</taxon>
        <taxon>Myomorpha</taxon>
        <taxon>Muroidea</taxon>
        <taxon>Muridae</taxon>
        <taxon>Murinae</taxon>
        <taxon>Rattus</taxon>
    </lineage>
</organism>
<feature type="chain" id="PRO_0000289138" description="Unconventional myosin-XVI">
    <location>
        <begin position="1"/>
        <end position="1912"/>
    </location>
</feature>
<feature type="repeat" description="ANK 1" evidence="4">
    <location>
        <begin position="59"/>
        <end position="88"/>
    </location>
</feature>
<feature type="repeat" description="ANK 2" evidence="4">
    <location>
        <begin position="92"/>
        <end position="121"/>
    </location>
</feature>
<feature type="repeat" description="ANK 3" evidence="4">
    <location>
        <begin position="125"/>
        <end position="154"/>
    </location>
</feature>
<feature type="repeat" description="ANK 4" evidence="4">
    <location>
        <begin position="158"/>
        <end position="189"/>
    </location>
</feature>
<feature type="repeat" description="ANK 5" evidence="4">
    <location>
        <begin position="191"/>
        <end position="217"/>
    </location>
</feature>
<feature type="repeat" description="ANK 6" evidence="4">
    <location>
        <begin position="221"/>
        <end position="250"/>
    </location>
</feature>
<feature type="repeat" description="ANK 7" evidence="4">
    <location>
        <begin position="253"/>
        <end position="283"/>
    </location>
</feature>
<feature type="repeat" description="ANK 8" evidence="4">
    <location>
        <begin position="287"/>
        <end position="316"/>
    </location>
</feature>
<feature type="domain" description="Myosin motor" evidence="6">
    <location>
        <begin position="401"/>
        <end position="1144"/>
    </location>
</feature>
<feature type="domain" description="IQ" evidence="5">
    <location>
        <begin position="1146"/>
        <end position="1175"/>
    </location>
</feature>
<feature type="region of interest" description="Disordered" evidence="7">
    <location>
        <begin position="371"/>
        <end position="404"/>
    </location>
</feature>
<feature type="region of interest" description="Involved in CYFIP1- and NCKAP1-binding" evidence="1">
    <location>
        <begin position="1110"/>
        <end position="1365"/>
    </location>
</feature>
<feature type="region of interest" description="Disordered" evidence="7">
    <location>
        <begin position="1220"/>
        <end position="1246"/>
    </location>
</feature>
<feature type="region of interest" description="Disordered" evidence="7">
    <location>
        <begin position="1259"/>
        <end position="1300"/>
    </location>
</feature>
<feature type="region of interest" description="Disordered" evidence="7">
    <location>
        <begin position="1317"/>
        <end position="1373"/>
    </location>
</feature>
<feature type="region of interest" description="Disordered" evidence="7">
    <location>
        <begin position="1543"/>
        <end position="1650"/>
    </location>
</feature>
<feature type="region of interest" description="Disordered" evidence="7">
    <location>
        <begin position="1664"/>
        <end position="1726"/>
    </location>
</feature>
<feature type="region of interest" description="Disordered" evidence="7">
    <location>
        <begin position="1756"/>
        <end position="1794"/>
    </location>
</feature>
<feature type="region of interest" description="Disordered" evidence="7">
    <location>
        <begin position="1869"/>
        <end position="1912"/>
    </location>
</feature>
<feature type="compositionally biased region" description="Polar residues" evidence="7">
    <location>
        <begin position="384"/>
        <end position="397"/>
    </location>
</feature>
<feature type="compositionally biased region" description="Basic and acidic residues" evidence="7">
    <location>
        <begin position="1220"/>
        <end position="1238"/>
    </location>
</feature>
<feature type="compositionally biased region" description="Polar residues" evidence="7">
    <location>
        <begin position="1264"/>
        <end position="1282"/>
    </location>
</feature>
<feature type="compositionally biased region" description="Basic residues" evidence="7">
    <location>
        <begin position="1339"/>
        <end position="1349"/>
    </location>
</feature>
<feature type="compositionally biased region" description="Polar residues" evidence="7">
    <location>
        <begin position="1547"/>
        <end position="1559"/>
    </location>
</feature>
<feature type="compositionally biased region" description="Pro residues" evidence="7">
    <location>
        <begin position="1585"/>
        <end position="1633"/>
    </location>
</feature>
<feature type="compositionally biased region" description="Polar residues" evidence="7">
    <location>
        <begin position="1664"/>
        <end position="1674"/>
    </location>
</feature>
<feature type="compositionally biased region" description="Pro residues" evidence="7">
    <location>
        <begin position="1710"/>
        <end position="1719"/>
    </location>
</feature>
<feature type="compositionally biased region" description="Polar residues" evidence="7">
    <location>
        <begin position="1769"/>
        <end position="1787"/>
    </location>
</feature>
<feature type="compositionally biased region" description="Basic and acidic residues" evidence="7">
    <location>
        <begin position="1869"/>
        <end position="1878"/>
    </location>
</feature>
<feature type="compositionally biased region" description="Polar residues" evidence="7">
    <location>
        <begin position="1901"/>
        <end position="1912"/>
    </location>
</feature>
<feature type="binding site" evidence="4">
    <location>
        <begin position="497"/>
        <end position="504"/>
    </location>
    <ligand>
        <name>ATP</name>
        <dbReference type="ChEBI" id="CHEBI:30616"/>
    </ligand>
</feature>
<feature type="splice variant" id="VSP_052444" description="In isoform 2." evidence="9">
    <original>A</original>
    <variation>G</variation>
    <location>
        <position position="1322"/>
    </location>
</feature>
<feature type="splice variant" id="VSP_052445" description="In isoform 2." evidence="9">
    <location>
        <begin position="1323"/>
        <end position="1912"/>
    </location>
</feature>
<sequence>MEIDQCLLESLPLGQRQRLVRRMRCEQIKAYYEREKVFQKQEGLLKRIKPGKSQKVRFGLADMIQDAIIHHHDKEVLQLLKEGADPHTLVSSGGSLLHLCARYDNVFIAEVLIDRGVNVNHQDEDFWAPMHIACACDNPDIVLLLILAGANVLLQDVNGNIPLDYAVEGTESSAILLAYLDENGVDLNSLRQIKLQRPLSMLTDVRHFLSSGGDVNEKNDDGVTLLHMACASGYKEVVLLLLEHGGDLNGMDDGYWTPLHLAAKYGQTTLVKLLLAHQANPHLVNCNGEKPSDIAASESIEEMLLKAEIAWEERMKESPSVPSLAQEELYEEILHDLPELSSKLSPLVLPIAKQDSLLEKDIMFKDTTKGLCNQESQDGPPETSMVSSSSKPEQVQLTPPAPSDDLATLSELNDSSLLYEIQKRFGNDQIHTFIGDIFLLVNPFKELPIYSTVVSQMYLSPTGQRSPSLPPHLFSCAERAFHRLFQERRPQNIILSGERGSGKTQASKQIMKHLTSRASSSCTMFDSRFKHAICILEAFGHAKTTLNNVSSCLIQYWELQFCQRRKHVTGARISTYMLEKPRLVAQPPGQGSFLIFSWLMDGLSAEEKCGLHLSNFCAHRYVSQGMREDVSTAERSLNKERLADLKHALNVIGFSALEVENLFAILSAILHIGDIQFTALTEADSAFVSDLQLLEQVADMLQVSTDELASALTTDIQYFKGDVIIRRHTTQIAAFYRDLLAKSLYSRLFGFLINTVNCCLQSQDEYKSLQTLDIGILDIFGFEEFQKNEFEQLCVNLTNEKMHHYIQEVLFLQEQTECVQEGVAMETACSPGNQAGVLDFFFQKPSGFFSLLDEESQAIWSVEPNLPRKLQGLLESSNTNAVYSPMKDGNGNVAFKGQGAAFTVMHYAGRVTYEIRGAVERNKDSLSQNLLFVMKTSENVVISHLFQSKLSPTGSLISSYPSFKFGGHKSSLLSKRIASSMVGVNKNYLELSKLLKKKGTCTFLQRLERGDPATTASQLTKSLADITAKLQKGSPHFILCVKPNTSQLPGVFDHFYVSAQLQYLGVLGLVRLFRYGYPVRPSFEDFLSRYEPLASVLLGEKKGQPAEERCRLVLQRCKLQGWQMGVHKVFLKYWQVDQLGDLWLQMQRKIVTCQKVIRGFLARQHLLQRMSIKQQEVTSIKSFLQSTEDMALKTYDALVIQNASDIAREHDRLRKEVHAAYHRNRQEEGTKRAEDQGGCRHAHSNSVPVPMAVDSLAQALAGPSSRSPSLHSVFSMDDSTGLPSPRKQPPPKPKRDPNTRLSASYEAVSACLSATKDAASEALTRPRPHSDDYSTMKKIPPRKPKRSPHTKLSGSYEEIWGPRPSGTMGQVGKHHAPGTLGVQWASPDSMPQCTPQLPLHLPLPQGDYDDDGEPVYIEMVGNAARAGGSETDSPDQGESVYEEMKYVLPEEGCGPGMLTFLPASPPLFLETRKAIILEAGEGSCQPLKDTCDIPPPFPNLLPHRPPLLVFPPTPVTCSPASDESPLTPLEVKKLPVLETNLKYPVQSEGSSPLSPQYSKAQKGENDQLTSPGFPVFNGPSRISPPATPPPPPGPPPAPCGPPSAPCGPPPAPCGPPPVPCGPPPAPCGPPPAPCGAAPAPCRPPTHFAFPPDSVLVTAAKALTNSDLPRTQPKPSSAPVLGPCSPFVKAPYSPGRTARADLRKASSTFSPPSPYSPPNSRPLSSPLDELASLFNSGRSVLRRSAVGRRIREAEGFETNMNLSSRDEPSSSEMASETQDRNANNHGTQLSSSLSSVVAAENGNPVTNGLAEDDGCSRLCLSGMGTSSFQRHRESHTTQVIHQLRLSENESVALQELLDWRRKLCESREGWQEAMQHPEPRAPPPPPCKKPTLLKKPEGGSCTRLSSQLWDSSI</sequence>
<protein>
    <recommendedName>
        <fullName>Unconventional myosin-XVI</fullName>
    </recommendedName>
    <alternativeName>
        <fullName>Myosin heavy chain myr 8</fullName>
    </alternativeName>
    <alternativeName>
        <fullName>Neuronal tyrosine-phosphorylated phosphoinositide-3-kinase adapter 3</fullName>
    </alternativeName>
    <alternativeName>
        <fullName>Unconventional myosin-16</fullName>
    </alternativeName>
</protein>
<reference evidence="10 11" key="1">
    <citation type="journal article" date="2001" name="J. Neurosci.">
        <title>Myr 8, a novel unconventional myosin expressed during brain development associates with the protein phosphatase catalytic subunits 1alpha and 1gamma1.</title>
        <authorList>
            <person name="Patel K.G."/>
            <person name="Liu C."/>
            <person name="Cameron P.L."/>
            <person name="Cameron R.S."/>
        </authorList>
    </citation>
    <scope>NUCLEOTIDE SEQUENCE [MRNA] (ISOFORMS 1 AND 2)</scope>
    <scope>FUNCTION</scope>
    <scope>SUBCELLULAR LOCATION</scope>
    <scope>TISSUE SPECIFICITY</scope>
    <scope>DEVELOPMENTAL STAGE</scope>
    <scope>INTERACTION WITH PPP1CA; PPP1CC AND F-ACTIN</scope>
    <source>
        <strain evidence="11">Sprague-Dawley</strain>
        <tissue evidence="8">Astrocyte</tissue>
    </source>
</reference>
<accession>Q9ERC1</accession>
<accession>Q9QXI0</accession>